<organismHost>
    <name type="scientific">Ornithodoros</name>
    <name type="common">relapsing fever ticks</name>
    <dbReference type="NCBI Taxonomy" id="6937"/>
</organismHost>
<organismHost>
    <name type="scientific">Phacochoerus aethiopicus</name>
    <name type="common">Warthog</name>
    <dbReference type="NCBI Taxonomy" id="85517"/>
</organismHost>
<organismHost>
    <name type="scientific">Phacochoerus africanus</name>
    <name type="common">Warthog</name>
    <dbReference type="NCBI Taxonomy" id="41426"/>
</organismHost>
<organismHost>
    <name type="scientific">Potamochoerus larvatus</name>
    <name type="common">Bushpig</name>
    <dbReference type="NCBI Taxonomy" id="273792"/>
</organismHost>
<organismHost>
    <name type="scientific">Sus scrofa</name>
    <name type="common">Pig</name>
    <dbReference type="NCBI Taxonomy" id="9823"/>
</organismHost>
<evidence type="ECO:0000250" key="1">
    <source>
        <dbReference type="UniProtKB" id="Q00946"/>
    </source>
</evidence>
<evidence type="ECO:0000255" key="2"/>
<evidence type="ECO:0000303" key="3">
    <source>
    </source>
</evidence>
<evidence type="ECO:0000305" key="4"/>
<evidence type="ECO:0000305" key="5">
    <source>
    </source>
</evidence>
<evidence type="ECO:0007744" key="6">
    <source>
        <dbReference type="PDB" id="6LJ9"/>
    </source>
</evidence>
<evidence type="ECO:0007744" key="7">
    <source>
        <dbReference type="PDB" id="6LJB"/>
    </source>
</evidence>
<evidence type="ECO:0007829" key="8">
    <source>
        <dbReference type="PDB" id="6LJ9"/>
    </source>
</evidence>
<evidence type="ECO:0007829" key="9">
    <source>
        <dbReference type="PDB" id="6LJB"/>
    </source>
</evidence>
<comment type="function">
    <text evidence="1">Cysteine protease that plays several role during infection including processing of the structural polyprotein or inhibition of the host immune response. Catalyzes the maturation of the pp220 and pp62 polyprotein precursors into core-shell proteins. Plays a role in the disruption of host pyroptosis via specific cleavage of gasdermin D/GSDMD. In addition, strongly decreases the host cGAS-STING signaling by targeting IKBKE via its enzymatic activity. Also impairs host FOXJ1-mediated antiviral effect via degradation of FOXJ1.</text>
</comment>
<comment type="subcellular location">
    <subcellularLocation>
        <location evidence="1">Host cytoplasm</location>
    </subcellularLocation>
    <subcellularLocation>
        <location evidence="1">Virion</location>
    </subcellularLocation>
    <text evidence="1">Found in the perinuclear cytoplasmic viral factories during assembly.</text>
</comment>
<comment type="induction">
    <text evidence="1">Expressed in the late phase of the viral replicative cycle.</text>
</comment>
<comment type="similarity">
    <text evidence="4">Belongs to the peptidase C63 family.</text>
</comment>
<proteinExistence type="evidence at protein level"/>
<organism>
    <name type="scientific">African swine fever virus (isolate Pig/Kenya/KEN-50/1950)</name>
    <name type="common">ASFV</name>
    <dbReference type="NCBI Taxonomy" id="561445"/>
    <lineage>
        <taxon>Viruses</taxon>
        <taxon>Varidnaviria</taxon>
        <taxon>Bamfordvirae</taxon>
        <taxon>Nucleocytoviricota</taxon>
        <taxon>Pokkesviricetes</taxon>
        <taxon>Asfuvirales</taxon>
        <taxon>Asfarviridae</taxon>
        <taxon>Asfivirus</taxon>
        <taxon>African swine fever virus</taxon>
    </lineage>
</organism>
<accession>P0C9B9</accession>
<name>VPRT_ASFK5</name>
<reference key="1">
    <citation type="submission" date="2003-03" db="EMBL/GenBank/DDBJ databases">
        <title>African swine fever virus genomes.</title>
        <authorList>
            <person name="Kutish G.F."/>
            <person name="Rock D.L."/>
        </authorList>
    </citation>
    <scope>NUCLEOTIDE SEQUENCE [LARGE SCALE GENOMIC DNA]</scope>
</reference>
<reference evidence="6 7" key="2">
    <citation type="journal article" date="2020" name="J. Virol.">
        <title>Crystal Structure of African Swine Fever Virus pS273R Protease and Implications for Inhibitor Design.</title>
        <authorList>
            <person name="Li G."/>
            <person name="Liu X."/>
            <person name="Yang M."/>
            <person name="Zhang G."/>
            <person name="Wang Z."/>
            <person name="Guo K."/>
            <person name="Gao Y."/>
            <person name="Jiao P."/>
            <person name="Sun J."/>
            <person name="Chen C."/>
            <person name="Wang H."/>
            <person name="Deng W."/>
            <person name="Xiao H."/>
            <person name="Li S."/>
            <person name="Wu H."/>
            <person name="Wang Y."/>
            <person name="Cao L."/>
            <person name="Jia Z."/>
            <person name="Shang L."/>
            <person name="Yang C."/>
            <person name="Guo Y."/>
            <person name="Rao Z."/>
        </authorList>
    </citation>
    <scope>X-RAY CRYSTALLOGRAPHY (2.31 ANGSTROMS)</scope>
    <scope>ACTIVE SITE</scope>
</reference>
<keyword id="KW-0002">3D-structure</keyword>
<keyword id="KW-1035">Host cytoplasm</keyword>
<keyword id="KW-0945">Host-virus interaction</keyword>
<keyword id="KW-0378">Hydrolase</keyword>
<keyword id="KW-1090">Inhibition of host innate immune response by virus</keyword>
<keyword id="KW-0426">Late protein</keyword>
<keyword id="KW-0645">Protease</keyword>
<keyword id="KW-0788">Thiol protease</keyword>
<keyword id="KW-0899">Viral immunoevasion</keyword>
<keyword id="KW-0946">Virion</keyword>
<gene>
    <name type="ordered locus">Ken-123</name>
</gene>
<dbReference type="EC" id="3.4.22.-"/>
<dbReference type="EMBL" id="AY261360">
    <property type="status" value="NOT_ANNOTATED_CDS"/>
    <property type="molecule type" value="Genomic_DNA"/>
</dbReference>
<dbReference type="PDB" id="6LJ9">
    <property type="method" value="X-ray"/>
    <property type="resolution" value="2.31 A"/>
    <property type="chains" value="A/B=1-273"/>
</dbReference>
<dbReference type="PDB" id="6LJB">
    <property type="method" value="X-ray"/>
    <property type="resolution" value="2.49 A"/>
    <property type="chains" value="A=1-273"/>
</dbReference>
<dbReference type="PDBsum" id="6LJ9"/>
<dbReference type="PDBsum" id="6LJB"/>
<dbReference type="SMR" id="P0C9B9"/>
<dbReference type="Proteomes" id="UP000000861">
    <property type="component" value="Segment"/>
</dbReference>
<dbReference type="GO" id="GO:0030430">
    <property type="term" value="C:host cell cytoplasm"/>
    <property type="evidence" value="ECO:0007669"/>
    <property type="project" value="UniProtKB-SubCell"/>
</dbReference>
<dbReference type="GO" id="GO:0044423">
    <property type="term" value="C:virion component"/>
    <property type="evidence" value="ECO:0007669"/>
    <property type="project" value="UniProtKB-KW"/>
</dbReference>
<dbReference type="GO" id="GO:0004197">
    <property type="term" value="F:cysteine-type endopeptidase activity"/>
    <property type="evidence" value="ECO:0007669"/>
    <property type="project" value="InterPro"/>
</dbReference>
<dbReference type="GO" id="GO:0006508">
    <property type="term" value="P:proteolysis"/>
    <property type="evidence" value="ECO:0007669"/>
    <property type="project" value="UniProtKB-KW"/>
</dbReference>
<dbReference type="GO" id="GO:0052170">
    <property type="term" value="P:symbiont-mediated suppression of host innate immune response"/>
    <property type="evidence" value="ECO:0007669"/>
    <property type="project" value="UniProtKB-KW"/>
</dbReference>
<dbReference type="GO" id="GO:0019082">
    <property type="term" value="P:viral protein processing"/>
    <property type="evidence" value="ECO:0007669"/>
    <property type="project" value="InterPro"/>
</dbReference>
<dbReference type="Gene3D" id="3.40.395.10">
    <property type="entry name" value="Adenoviral Proteinase, Chain A"/>
    <property type="match status" value="1"/>
</dbReference>
<dbReference type="InterPro" id="IPR038765">
    <property type="entry name" value="Papain-like_cys_pep_sf"/>
</dbReference>
<dbReference type="InterPro" id="IPR003653">
    <property type="entry name" value="Peptidase_C48_C"/>
</dbReference>
<dbReference type="InterPro" id="IPR016510">
    <property type="entry name" value="VPRT"/>
</dbReference>
<dbReference type="Pfam" id="PF02902">
    <property type="entry name" value="Peptidase_C48"/>
    <property type="match status" value="1"/>
</dbReference>
<dbReference type="PIRSF" id="PIRSF007159">
    <property type="entry name" value="Peptidase_ASVF"/>
    <property type="match status" value="1"/>
</dbReference>
<dbReference type="SUPFAM" id="SSF54001">
    <property type="entry name" value="Cysteine proteinases"/>
    <property type="match status" value="1"/>
</dbReference>
<protein>
    <recommendedName>
        <fullName evidence="3">SUMO-1 cysteine protease S273R</fullName>
        <shortName>pS273R</shortName>
        <ecNumber>3.4.22.-</ecNumber>
    </recommendedName>
</protein>
<sequence>MSILEKITSSPSECAEHITNKDSCLSKKIQKELTSFLQKKETLGCDSESCVITHPAVKAYAQQKGLDLSKELETRFKAPGPRNNTGLLTNFNIDETLQRWAIKYTKFFNCPFSMMDFERIHYKFNQVDMVKVYKGEELQYVEGKAVKRPCNTFGCVLNTDFSTGTGKHWVAIFVDMRGDCWSIEYFNSAGNSPPGPVIRWMERVKQQLLKIHHTVKTLAVTNIRHQRSQTECGPYSLFYIRARLDNVSYTHFISTRITDEEMYKFRTHLFRIA</sequence>
<feature type="chain" id="PRO_0000373129" description="SUMO-1 cysteine protease S273R">
    <location>
        <begin position="1"/>
        <end position="273"/>
    </location>
</feature>
<feature type="active site" evidence="5">
    <location>
        <position position="168"/>
    </location>
</feature>
<feature type="active site" evidence="5">
    <location>
        <position position="187"/>
    </location>
</feature>
<feature type="active site" description="Nucleophile" evidence="5">
    <location>
        <position position="232"/>
    </location>
</feature>
<feature type="binding site" evidence="2">
    <location>
        <position position="226"/>
    </location>
    <ligand>
        <name>substrate</name>
    </ligand>
</feature>
<feature type="helix" evidence="8">
    <location>
        <begin position="3"/>
        <end position="6"/>
    </location>
</feature>
<feature type="helix" evidence="8">
    <location>
        <begin position="27"/>
        <end position="32"/>
    </location>
</feature>
<feature type="helix" evidence="8">
    <location>
        <begin position="34"/>
        <end position="38"/>
    </location>
</feature>
<feature type="helix" evidence="8">
    <location>
        <begin position="41"/>
        <end position="43"/>
    </location>
</feature>
<feature type="helix" evidence="8">
    <location>
        <begin position="48"/>
        <end position="51"/>
    </location>
</feature>
<feature type="helix" evidence="8">
    <location>
        <begin position="55"/>
        <end position="60"/>
    </location>
</feature>
<feature type="turn" evidence="8">
    <location>
        <begin position="61"/>
        <end position="65"/>
    </location>
</feature>
<feature type="helix" evidence="8">
    <location>
        <begin position="68"/>
        <end position="75"/>
    </location>
</feature>
<feature type="strand" evidence="8">
    <location>
        <begin position="82"/>
        <end position="84"/>
    </location>
</feature>
<feature type="helix" evidence="8">
    <location>
        <begin position="90"/>
        <end position="103"/>
    </location>
</feature>
<feature type="strand" evidence="8">
    <location>
        <begin position="107"/>
        <end position="109"/>
    </location>
</feature>
<feature type="turn" evidence="9">
    <location>
        <begin position="115"/>
        <end position="119"/>
    </location>
</feature>
<feature type="helix" evidence="9">
    <location>
        <begin position="123"/>
        <end position="126"/>
    </location>
</feature>
<feature type="helix" evidence="8">
    <location>
        <begin position="129"/>
        <end position="133"/>
    </location>
</feature>
<feature type="strand" evidence="8">
    <location>
        <begin position="137"/>
        <end position="141"/>
    </location>
</feature>
<feature type="strand" evidence="8">
    <location>
        <begin position="144"/>
        <end position="147"/>
    </location>
</feature>
<feature type="strand" evidence="8">
    <location>
        <begin position="151"/>
        <end position="158"/>
    </location>
</feature>
<feature type="strand" evidence="8">
    <location>
        <begin position="162"/>
        <end position="166"/>
    </location>
</feature>
<feature type="strand" evidence="8">
    <location>
        <begin position="169"/>
        <end position="175"/>
    </location>
</feature>
<feature type="strand" evidence="8">
    <location>
        <begin position="178"/>
        <end position="186"/>
    </location>
</feature>
<feature type="helix" evidence="8">
    <location>
        <begin position="195"/>
        <end position="208"/>
    </location>
</feature>
<feature type="turn" evidence="8">
    <location>
        <begin position="209"/>
        <end position="211"/>
    </location>
</feature>
<feature type="strand" evidence="8">
    <location>
        <begin position="215"/>
        <end position="220"/>
    </location>
</feature>
<feature type="strand" evidence="8">
    <location>
        <begin position="228"/>
        <end position="230"/>
    </location>
</feature>
<feature type="helix" evidence="8">
    <location>
        <begin position="232"/>
        <end position="244"/>
    </location>
</feature>
<feature type="helix" evidence="8">
    <location>
        <begin position="251"/>
        <end position="254"/>
    </location>
</feature>
<feature type="helix" evidence="8">
    <location>
        <begin position="259"/>
        <end position="269"/>
    </location>
</feature>